<evidence type="ECO:0000255" key="1">
    <source>
        <dbReference type="HAMAP-Rule" id="MF_01577"/>
    </source>
</evidence>
<evidence type="ECO:0000305" key="2"/>
<dbReference type="EMBL" id="CP000266">
    <property type="protein sequence ID" value="ABF04262.1"/>
    <property type="status" value="ALT_FRAME"/>
    <property type="molecule type" value="Genomic_DNA"/>
</dbReference>
<dbReference type="SMR" id="Q0T353"/>
<dbReference type="KEGG" id="sfv:SFV_2138"/>
<dbReference type="HOGENOM" id="CLU_000960_28_0_6"/>
<dbReference type="Proteomes" id="UP000000659">
    <property type="component" value="Chromosome"/>
</dbReference>
<dbReference type="GO" id="GO:0005886">
    <property type="term" value="C:plasma membrane"/>
    <property type="evidence" value="ECO:0007669"/>
    <property type="project" value="UniProtKB-SubCell"/>
</dbReference>
<dbReference type="GO" id="GO:0022857">
    <property type="term" value="F:transmembrane transporter activity"/>
    <property type="evidence" value="ECO:0007669"/>
    <property type="project" value="UniProtKB-UniRule"/>
</dbReference>
<dbReference type="CDD" id="cd17503">
    <property type="entry name" value="MFS_LmrB_MDR_like"/>
    <property type="match status" value="1"/>
</dbReference>
<dbReference type="FunFam" id="1.20.1250.20:FF:000021">
    <property type="entry name" value="Putative multidrug resistance protein MdtD"/>
    <property type="match status" value="1"/>
</dbReference>
<dbReference type="FunFam" id="1.20.1720.10:FF:000001">
    <property type="entry name" value="Putative multidrug resistance protein MdtD"/>
    <property type="match status" value="1"/>
</dbReference>
<dbReference type="Gene3D" id="1.20.1250.20">
    <property type="entry name" value="MFS general substrate transporter like domains"/>
    <property type="match status" value="1"/>
</dbReference>
<dbReference type="Gene3D" id="1.20.1720.10">
    <property type="entry name" value="Multidrug resistance protein D"/>
    <property type="match status" value="1"/>
</dbReference>
<dbReference type="HAMAP" id="MF_01577">
    <property type="entry name" value="MFS_MdtD"/>
    <property type="match status" value="1"/>
</dbReference>
<dbReference type="InterPro" id="IPR004638">
    <property type="entry name" value="EmrB-like"/>
</dbReference>
<dbReference type="InterPro" id="IPR011701">
    <property type="entry name" value="MFS"/>
</dbReference>
<dbReference type="InterPro" id="IPR020846">
    <property type="entry name" value="MFS_dom"/>
</dbReference>
<dbReference type="InterPro" id="IPR036259">
    <property type="entry name" value="MFS_trans_sf"/>
</dbReference>
<dbReference type="InterPro" id="IPR023721">
    <property type="entry name" value="Multi-R_MdtD"/>
</dbReference>
<dbReference type="NCBIfam" id="TIGR00711">
    <property type="entry name" value="efflux_EmrB"/>
    <property type="match status" value="1"/>
</dbReference>
<dbReference type="NCBIfam" id="NF007799">
    <property type="entry name" value="PRK10504.1"/>
    <property type="match status" value="1"/>
</dbReference>
<dbReference type="PANTHER" id="PTHR42718:SF46">
    <property type="entry name" value="BLR6921 PROTEIN"/>
    <property type="match status" value="1"/>
</dbReference>
<dbReference type="PANTHER" id="PTHR42718">
    <property type="entry name" value="MAJOR FACILITATOR SUPERFAMILY MULTIDRUG TRANSPORTER MFSC"/>
    <property type="match status" value="1"/>
</dbReference>
<dbReference type="Pfam" id="PF07690">
    <property type="entry name" value="MFS_1"/>
    <property type="match status" value="1"/>
</dbReference>
<dbReference type="PRINTS" id="PR01036">
    <property type="entry name" value="TCRTETB"/>
</dbReference>
<dbReference type="SUPFAM" id="SSF103473">
    <property type="entry name" value="MFS general substrate transporter"/>
    <property type="match status" value="1"/>
</dbReference>
<dbReference type="PROSITE" id="PS50850">
    <property type="entry name" value="MFS"/>
    <property type="match status" value="1"/>
</dbReference>
<name>MDTD_SHIF8</name>
<gene>
    <name evidence="1" type="primary">mdtD</name>
    <name type="ordered locus">SFV_2138</name>
</gene>
<reference key="1">
    <citation type="journal article" date="2006" name="BMC Genomics">
        <title>Complete genome sequence of Shigella flexneri 5b and comparison with Shigella flexneri 2a.</title>
        <authorList>
            <person name="Nie H."/>
            <person name="Yang F."/>
            <person name="Zhang X."/>
            <person name="Yang J."/>
            <person name="Chen L."/>
            <person name="Wang J."/>
            <person name="Xiong Z."/>
            <person name="Peng J."/>
            <person name="Sun L."/>
            <person name="Dong J."/>
            <person name="Xue Y."/>
            <person name="Xu X."/>
            <person name="Chen S."/>
            <person name="Yao Z."/>
            <person name="Shen Y."/>
            <person name="Jin Q."/>
        </authorList>
    </citation>
    <scope>NUCLEOTIDE SEQUENCE [LARGE SCALE GENOMIC DNA]</scope>
    <source>
        <strain>8401</strain>
    </source>
</reference>
<organism>
    <name type="scientific">Shigella flexneri serotype 5b (strain 8401)</name>
    <dbReference type="NCBI Taxonomy" id="373384"/>
    <lineage>
        <taxon>Bacteria</taxon>
        <taxon>Pseudomonadati</taxon>
        <taxon>Pseudomonadota</taxon>
        <taxon>Gammaproteobacteria</taxon>
        <taxon>Enterobacterales</taxon>
        <taxon>Enterobacteriaceae</taxon>
        <taxon>Shigella</taxon>
    </lineage>
</organism>
<keyword id="KW-0997">Cell inner membrane</keyword>
<keyword id="KW-1003">Cell membrane</keyword>
<keyword id="KW-0472">Membrane</keyword>
<keyword id="KW-0812">Transmembrane</keyword>
<keyword id="KW-1133">Transmembrane helix</keyword>
<keyword id="KW-0813">Transport</keyword>
<comment type="subcellular location">
    <subcellularLocation>
        <location evidence="1">Cell inner membrane</location>
        <topology evidence="1">Multi-pass membrane protein</topology>
    </subcellularLocation>
</comment>
<comment type="similarity">
    <text evidence="1">Belongs to the major facilitator superfamily. TCR/Tet family.</text>
</comment>
<comment type="sequence caution" evidence="2">
    <conflict type="frameshift">
        <sequence resource="EMBL-CDS" id="ABF04262"/>
    </conflict>
</comment>
<sequence length="471" mass="50923">MTDLPDSTRWQLWIVAFGFFMQSLDTTIVNTAIPSMAQSLGESPLHMHMVIVSYVLTVAVMLPASGWLADKVGVRNIFFTAIVLFTLGSLFCALSGTLNELLLARALQGVGGAMMVPVGRLTVMKIVPREQYMAAMTFVTLPGQVGPLLGPALGGLLVEYASWHWIFLINIPVGIIGAIATLMLMPNYTMQTRRFDLSGFLLLAVGMAVLTLALDGSKGTGLSPLAIAGLVAVGVVALVLYLLHARNNNRALFSLKLFRTRTFSLGLAGSFAGRIGSGMLPFMTPVFLQIGLGFSPFHAGLMMIPMVLGSMGMKRIVVQVVNRFGYRRVLVATTLGLSLVTLLFMTTALLGWYYVLPFVLFLQGMVNSTRFSSMNTLTLKDLPDNLASSGNSLLSMIMQLSMSIGVTIAGLLLGLFGSQHVSVDSGTTQTVFMYTWLSMAFIIALPAFIFARVPNDTHQNVAISRRKRSAQ</sequence>
<feature type="chain" id="PRO_0000280492" description="Putative multidrug resistance protein MdtD">
    <location>
        <begin position="1"/>
        <end position="471"/>
    </location>
</feature>
<feature type="topological domain" description="Periplasmic" evidence="1">
    <location>
        <begin position="1"/>
        <end position="12"/>
    </location>
</feature>
<feature type="transmembrane region" description="Helical" evidence="1">
    <location>
        <begin position="13"/>
        <end position="33"/>
    </location>
</feature>
<feature type="topological domain" description="Cytoplasmic" evidence="1">
    <location>
        <begin position="34"/>
        <end position="48"/>
    </location>
</feature>
<feature type="transmembrane region" description="Helical" evidence="1">
    <location>
        <begin position="49"/>
        <end position="69"/>
    </location>
</feature>
<feature type="topological domain" description="Periplasmic" evidence="1">
    <location>
        <begin position="70"/>
        <end position="76"/>
    </location>
</feature>
<feature type="transmembrane region" description="Helical" evidence="1">
    <location>
        <begin position="77"/>
        <end position="97"/>
    </location>
</feature>
<feature type="topological domain" description="Cytoplasmic" evidence="1">
    <location>
        <begin position="98"/>
        <end position="101"/>
    </location>
</feature>
<feature type="transmembrane region" description="Helical" evidence="1">
    <location>
        <begin position="102"/>
        <end position="124"/>
    </location>
</feature>
<feature type="topological domain" description="Periplasmic" evidence="1">
    <location>
        <begin position="125"/>
        <end position="137"/>
    </location>
</feature>
<feature type="transmembrane region" description="Helical" evidence="1">
    <location>
        <begin position="138"/>
        <end position="158"/>
    </location>
</feature>
<feature type="topological domain" description="Cytoplasmic" evidence="1">
    <location>
        <begin position="159"/>
        <end position="164"/>
    </location>
</feature>
<feature type="transmembrane region" description="Helical" evidence="1">
    <location>
        <begin position="165"/>
        <end position="185"/>
    </location>
</feature>
<feature type="topological domain" description="Periplasmic" evidence="1">
    <location>
        <begin position="186"/>
        <end position="196"/>
    </location>
</feature>
<feature type="transmembrane region" description="Helical" evidence="1">
    <location>
        <begin position="197"/>
        <end position="217"/>
    </location>
</feature>
<feature type="topological domain" description="Cytoplasmic" evidence="1">
    <location>
        <begin position="218"/>
        <end position="224"/>
    </location>
</feature>
<feature type="transmembrane region" description="Helical" evidence="1">
    <location>
        <begin position="225"/>
        <end position="245"/>
    </location>
</feature>
<feature type="topological domain" description="Periplasmic" evidence="1">
    <location>
        <begin position="246"/>
        <end position="262"/>
    </location>
</feature>
<feature type="transmembrane region" description="Helical" evidence="1">
    <location>
        <begin position="263"/>
        <end position="283"/>
    </location>
</feature>
<feature type="topological domain" description="Cytoplasmic" evidence="1">
    <location>
        <begin position="284"/>
        <end position="285"/>
    </location>
</feature>
<feature type="transmembrane region" description="Helical" evidence="1">
    <location>
        <begin position="286"/>
        <end position="306"/>
    </location>
</feature>
<feature type="topological domain" description="Periplasmic" evidence="1">
    <location>
        <begin position="307"/>
        <end position="341"/>
    </location>
</feature>
<feature type="transmembrane region" description="Helical" evidence="1">
    <location>
        <begin position="342"/>
        <end position="362"/>
    </location>
</feature>
<feature type="topological domain" description="Cytoplasmic" evidence="1">
    <location>
        <begin position="363"/>
        <end position="395"/>
    </location>
</feature>
<feature type="transmembrane region" description="Helical" evidence="1">
    <location>
        <begin position="396"/>
        <end position="416"/>
    </location>
</feature>
<feature type="topological domain" description="Periplasmic" evidence="1">
    <location>
        <begin position="417"/>
        <end position="430"/>
    </location>
</feature>
<feature type="transmembrane region" description="Helical" evidence="1">
    <location>
        <begin position="431"/>
        <end position="451"/>
    </location>
</feature>
<feature type="topological domain" description="Cytoplasmic" evidence="1">
    <location>
        <begin position="452"/>
        <end position="471"/>
    </location>
</feature>
<accession>Q0T353</accession>
<proteinExistence type="inferred from homology"/>
<protein>
    <recommendedName>
        <fullName evidence="1">Putative multidrug resistance protein MdtD</fullName>
    </recommendedName>
</protein>